<sequence>MSGPQHITILGATGSIGLSTLDVVARHPTLYQVFALTGFSRLDELLALCIKHTPQYAVVPEQVAARKLQDDLAAAGLDTRVLVGEGGLCEVAAHPMVDAVMAAIVGAAGLRPTLAAVEAGKKVLLANKEALVMSGALFMQAVRQSGAVLLPIDSEHNAIFQCLPGDFARGLGAVGVRRIMLTASGGPFRETPLEQLQDVTPEQACAHPVWSMGRKISVDSATMMNKGLELIEACWLFDARPDQVEVVIHPQSVIHSLVDYVDGSVLAQLGNPDMRTPIANALAWPARVDSGVAPLDLFRIGQLDFQEPDEERFPCLRLARQAAEAGGSAPAMLNAANEVAVAAFLDGRIRYLEIAGIIEEVLNREPVTAVVGLDAVFAADAKARLLAGQWLERNER</sequence>
<comment type="function">
    <text evidence="1">Catalyzes the NADPH-dependent rearrangement and reduction of 1-deoxy-D-xylulose-5-phosphate (DXP) to 2-C-methyl-D-erythritol 4-phosphate (MEP).</text>
</comment>
<comment type="catalytic activity">
    <reaction evidence="1">
        <text>2-C-methyl-D-erythritol 4-phosphate + NADP(+) = 1-deoxy-D-xylulose 5-phosphate + NADPH + H(+)</text>
        <dbReference type="Rhea" id="RHEA:13717"/>
        <dbReference type="ChEBI" id="CHEBI:15378"/>
        <dbReference type="ChEBI" id="CHEBI:57783"/>
        <dbReference type="ChEBI" id="CHEBI:57792"/>
        <dbReference type="ChEBI" id="CHEBI:58262"/>
        <dbReference type="ChEBI" id="CHEBI:58349"/>
        <dbReference type="EC" id="1.1.1.267"/>
    </reaction>
    <physiologicalReaction direction="right-to-left" evidence="1">
        <dbReference type="Rhea" id="RHEA:13719"/>
    </physiologicalReaction>
</comment>
<comment type="cofactor">
    <cofactor evidence="1">
        <name>Mg(2+)</name>
        <dbReference type="ChEBI" id="CHEBI:18420"/>
    </cofactor>
    <cofactor evidence="1">
        <name>Mn(2+)</name>
        <dbReference type="ChEBI" id="CHEBI:29035"/>
    </cofactor>
</comment>
<comment type="pathway">
    <text evidence="1">Isoprenoid biosynthesis; isopentenyl diphosphate biosynthesis via DXP pathway; isopentenyl diphosphate from 1-deoxy-D-xylulose 5-phosphate: step 1/6.</text>
</comment>
<comment type="similarity">
    <text evidence="1">Belongs to the DXR family.</text>
</comment>
<dbReference type="EC" id="1.1.1.267" evidence="1"/>
<dbReference type="EMBL" id="AE016853">
    <property type="protein sequence ID" value="AAO55060.1"/>
    <property type="molecule type" value="Genomic_DNA"/>
</dbReference>
<dbReference type="RefSeq" id="NP_791365.1">
    <property type="nucleotide sequence ID" value="NC_004578.1"/>
</dbReference>
<dbReference type="SMR" id="Q886N7"/>
<dbReference type="STRING" id="223283.PSPTO_1540"/>
<dbReference type="GeneID" id="1183177"/>
<dbReference type="KEGG" id="pst:PSPTO_1540"/>
<dbReference type="PATRIC" id="fig|223283.9.peg.1566"/>
<dbReference type="eggNOG" id="COG0743">
    <property type="taxonomic scope" value="Bacteria"/>
</dbReference>
<dbReference type="HOGENOM" id="CLU_035714_4_0_6"/>
<dbReference type="OrthoDB" id="9806546at2"/>
<dbReference type="PhylomeDB" id="Q886N7"/>
<dbReference type="UniPathway" id="UPA00056">
    <property type="reaction ID" value="UER00092"/>
</dbReference>
<dbReference type="Proteomes" id="UP000002515">
    <property type="component" value="Chromosome"/>
</dbReference>
<dbReference type="GO" id="GO:0030604">
    <property type="term" value="F:1-deoxy-D-xylulose-5-phosphate reductoisomerase activity"/>
    <property type="evidence" value="ECO:0007669"/>
    <property type="project" value="UniProtKB-UniRule"/>
</dbReference>
<dbReference type="GO" id="GO:0030145">
    <property type="term" value="F:manganese ion binding"/>
    <property type="evidence" value="ECO:0007669"/>
    <property type="project" value="TreeGrafter"/>
</dbReference>
<dbReference type="GO" id="GO:0070402">
    <property type="term" value="F:NADPH binding"/>
    <property type="evidence" value="ECO:0007669"/>
    <property type="project" value="InterPro"/>
</dbReference>
<dbReference type="GO" id="GO:0051484">
    <property type="term" value="P:isopentenyl diphosphate biosynthetic process, methylerythritol 4-phosphate pathway involved in terpenoid biosynthetic process"/>
    <property type="evidence" value="ECO:0007669"/>
    <property type="project" value="TreeGrafter"/>
</dbReference>
<dbReference type="FunFam" id="1.10.1740.10:FF:000004">
    <property type="entry name" value="1-deoxy-D-xylulose 5-phosphate reductoisomerase"/>
    <property type="match status" value="1"/>
</dbReference>
<dbReference type="FunFam" id="3.40.50.720:FF:000045">
    <property type="entry name" value="1-deoxy-D-xylulose 5-phosphate reductoisomerase"/>
    <property type="match status" value="1"/>
</dbReference>
<dbReference type="Gene3D" id="1.10.1740.10">
    <property type="match status" value="1"/>
</dbReference>
<dbReference type="Gene3D" id="3.40.50.720">
    <property type="entry name" value="NAD(P)-binding Rossmann-like Domain"/>
    <property type="match status" value="1"/>
</dbReference>
<dbReference type="HAMAP" id="MF_00183">
    <property type="entry name" value="DXP_reductoisom"/>
    <property type="match status" value="1"/>
</dbReference>
<dbReference type="InterPro" id="IPR003821">
    <property type="entry name" value="DXP_reductoisomerase"/>
</dbReference>
<dbReference type="InterPro" id="IPR013644">
    <property type="entry name" value="DXP_reductoisomerase_C"/>
</dbReference>
<dbReference type="InterPro" id="IPR013512">
    <property type="entry name" value="DXP_reductoisomerase_N"/>
</dbReference>
<dbReference type="InterPro" id="IPR026877">
    <property type="entry name" value="DXPR_C"/>
</dbReference>
<dbReference type="InterPro" id="IPR036169">
    <property type="entry name" value="DXPR_C_sf"/>
</dbReference>
<dbReference type="InterPro" id="IPR036291">
    <property type="entry name" value="NAD(P)-bd_dom_sf"/>
</dbReference>
<dbReference type="NCBIfam" id="TIGR00243">
    <property type="entry name" value="Dxr"/>
    <property type="match status" value="1"/>
</dbReference>
<dbReference type="NCBIfam" id="NF003938">
    <property type="entry name" value="PRK05447.1-1"/>
    <property type="match status" value="1"/>
</dbReference>
<dbReference type="NCBIfam" id="NF009114">
    <property type="entry name" value="PRK12464.1"/>
    <property type="match status" value="1"/>
</dbReference>
<dbReference type="PANTHER" id="PTHR30525">
    <property type="entry name" value="1-DEOXY-D-XYLULOSE 5-PHOSPHATE REDUCTOISOMERASE"/>
    <property type="match status" value="1"/>
</dbReference>
<dbReference type="PANTHER" id="PTHR30525:SF0">
    <property type="entry name" value="1-DEOXY-D-XYLULOSE 5-PHOSPHATE REDUCTOISOMERASE, CHLOROPLASTIC"/>
    <property type="match status" value="1"/>
</dbReference>
<dbReference type="Pfam" id="PF08436">
    <property type="entry name" value="DXP_redisom_C"/>
    <property type="match status" value="1"/>
</dbReference>
<dbReference type="Pfam" id="PF02670">
    <property type="entry name" value="DXP_reductoisom"/>
    <property type="match status" value="1"/>
</dbReference>
<dbReference type="Pfam" id="PF13288">
    <property type="entry name" value="DXPR_C"/>
    <property type="match status" value="1"/>
</dbReference>
<dbReference type="PIRSF" id="PIRSF006205">
    <property type="entry name" value="Dxp_reductismrs"/>
    <property type="match status" value="1"/>
</dbReference>
<dbReference type="SUPFAM" id="SSF69055">
    <property type="entry name" value="1-deoxy-D-xylulose-5-phosphate reductoisomerase, C-terminal domain"/>
    <property type="match status" value="1"/>
</dbReference>
<dbReference type="SUPFAM" id="SSF55347">
    <property type="entry name" value="Glyceraldehyde-3-phosphate dehydrogenase-like, C-terminal domain"/>
    <property type="match status" value="1"/>
</dbReference>
<dbReference type="SUPFAM" id="SSF51735">
    <property type="entry name" value="NAD(P)-binding Rossmann-fold domains"/>
    <property type="match status" value="1"/>
</dbReference>
<keyword id="KW-0414">Isoprene biosynthesis</keyword>
<keyword id="KW-0464">Manganese</keyword>
<keyword id="KW-0479">Metal-binding</keyword>
<keyword id="KW-0521">NADP</keyword>
<keyword id="KW-0560">Oxidoreductase</keyword>
<keyword id="KW-1185">Reference proteome</keyword>
<accession>Q886N7</accession>
<protein>
    <recommendedName>
        <fullName evidence="1">1-deoxy-D-xylulose 5-phosphate reductoisomerase</fullName>
        <shortName evidence="1">DXP reductoisomerase</shortName>
        <ecNumber evidence="1">1.1.1.267</ecNumber>
    </recommendedName>
    <alternativeName>
        <fullName evidence="1">1-deoxyxylulose-5-phosphate reductoisomerase</fullName>
    </alternativeName>
    <alternativeName>
        <fullName evidence="1">2-C-methyl-D-erythritol 4-phosphate synthase</fullName>
    </alternativeName>
</protein>
<name>DXR_PSESM</name>
<proteinExistence type="inferred from homology"/>
<organism>
    <name type="scientific">Pseudomonas syringae pv. tomato (strain ATCC BAA-871 / DC3000)</name>
    <dbReference type="NCBI Taxonomy" id="223283"/>
    <lineage>
        <taxon>Bacteria</taxon>
        <taxon>Pseudomonadati</taxon>
        <taxon>Pseudomonadota</taxon>
        <taxon>Gammaproteobacteria</taxon>
        <taxon>Pseudomonadales</taxon>
        <taxon>Pseudomonadaceae</taxon>
        <taxon>Pseudomonas</taxon>
    </lineage>
</organism>
<gene>
    <name evidence="1" type="primary">dxr</name>
    <name type="ordered locus">PSPTO_1540</name>
</gene>
<feature type="chain" id="PRO_0000163701" description="1-deoxy-D-xylulose 5-phosphate reductoisomerase">
    <location>
        <begin position="1"/>
        <end position="396"/>
    </location>
</feature>
<feature type="binding site" evidence="1">
    <location>
        <position position="13"/>
    </location>
    <ligand>
        <name>NADPH</name>
        <dbReference type="ChEBI" id="CHEBI:57783"/>
    </ligand>
</feature>
<feature type="binding site" evidence="1">
    <location>
        <position position="14"/>
    </location>
    <ligand>
        <name>NADPH</name>
        <dbReference type="ChEBI" id="CHEBI:57783"/>
    </ligand>
</feature>
<feature type="binding site" evidence="1">
    <location>
        <position position="15"/>
    </location>
    <ligand>
        <name>NADPH</name>
        <dbReference type="ChEBI" id="CHEBI:57783"/>
    </ligand>
</feature>
<feature type="binding site" evidence="1">
    <location>
        <position position="16"/>
    </location>
    <ligand>
        <name>NADPH</name>
        <dbReference type="ChEBI" id="CHEBI:57783"/>
    </ligand>
</feature>
<feature type="binding site" evidence="1">
    <location>
        <position position="127"/>
    </location>
    <ligand>
        <name>NADPH</name>
        <dbReference type="ChEBI" id="CHEBI:57783"/>
    </ligand>
</feature>
<feature type="binding site" evidence="1">
    <location>
        <position position="128"/>
    </location>
    <ligand>
        <name>1-deoxy-D-xylulose 5-phosphate</name>
        <dbReference type="ChEBI" id="CHEBI:57792"/>
    </ligand>
</feature>
<feature type="binding site" evidence="1">
    <location>
        <position position="129"/>
    </location>
    <ligand>
        <name>NADPH</name>
        <dbReference type="ChEBI" id="CHEBI:57783"/>
    </ligand>
</feature>
<feature type="binding site" evidence="1">
    <location>
        <position position="153"/>
    </location>
    <ligand>
        <name>Mn(2+)</name>
        <dbReference type="ChEBI" id="CHEBI:29035"/>
    </ligand>
</feature>
<feature type="binding site" evidence="1">
    <location>
        <position position="154"/>
    </location>
    <ligand>
        <name>1-deoxy-D-xylulose 5-phosphate</name>
        <dbReference type="ChEBI" id="CHEBI:57792"/>
    </ligand>
</feature>
<feature type="binding site" evidence="1">
    <location>
        <position position="155"/>
    </location>
    <ligand>
        <name>1-deoxy-D-xylulose 5-phosphate</name>
        <dbReference type="ChEBI" id="CHEBI:57792"/>
    </ligand>
</feature>
<feature type="binding site" evidence="1">
    <location>
        <position position="155"/>
    </location>
    <ligand>
        <name>Mn(2+)</name>
        <dbReference type="ChEBI" id="CHEBI:29035"/>
    </ligand>
</feature>
<feature type="binding site" evidence="1">
    <location>
        <position position="184"/>
    </location>
    <ligand>
        <name>1-deoxy-D-xylulose 5-phosphate</name>
        <dbReference type="ChEBI" id="CHEBI:57792"/>
    </ligand>
</feature>
<feature type="binding site" evidence="1">
    <location>
        <position position="207"/>
    </location>
    <ligand>
        <name>1-deoxy-D-xylulose 5-phosphate</name>
        <dbReference type="ChEBI" id="CHEBI:57792"/>
    </ligand>
</feature>
<feature type="binding site" evidence="1">
    <location>
        <position position="213"/>
    </location>
    <ligand>
        <name>NADPH</name>
        <dbReference type="ChEBI" id="CHEBI:57783"/>
    </ligand>
</feature>
<feature type="binding site" evidence="1">
    <location>
        <position position="220"/>
    </location>
    <ligand>
        <name>1-deoxy-D-xylulose 5-phosphate</name>
        <dbReference type="ChEBI" id="CHEBI:57792"/>
    </ligand>
</feature>
<feature type="binding site" evidence="1">
    <location>
        <position position="225"/>
    </location>
    <ligand>
        <name>1-deoxy-D-xylulose 5-phosphate</name>
        <dbReference type="ChEBI" id="CHEBI:57792"/>
    </ligand>
</feature>
<feature type="binding site" evidence="1">
    <location>
        <position position="226"/>
    </location>
    <ligand>
        <name>1-deoxy-D-xylulose 5-phosphate</name>
        <dbReference type="ChEBI" id="CHEBI:57792"/>
    </ligand>
</feature>
<feature type="binding site" evidence="1">
    <location>
        <position position="229"/>
    </location>
    <ligand>
        <name>1-deoxy-D-xylulose 5-phosphate</name>
        <dbReference type="ChEBI" id="CHEBI:57792"/>
    </ligand>
</feature>
<feature type="binding site" evidence="1">
    <location>
        <position position="229"/>
    </location>
    <ligand>
        <name>Mn(2+)</name>
        <dbReference type="ChEBI" id="CHEBI:29035"/>
    </ligand>
</feature>
<reference key="1">
    <citation type="journal article" date="2003" name="Proc. Natl. Acad. Sci. U.S.A.">
        <title>The complete genome sequence of the Arabidopsis and tomato pathogen Pseudomonas syringae pv. tomato DC3000.</title>
        <authorList>
            <person name="Buell C.R."/>
            <person name="Joardar V."/>
            <person name="Lindeberg M."/>
            <person name="Selengut J."/>
            <person name="Paulsen I.T."/>
            <person name="Gwinn M.L."/>
            <person name="Dodson R.J."/>
            <person name="DeBoy R.T."/>
            <person name="Durkin A.S."/>
            <person name="Kolonay J.F."/>
            <person name="Madupu R."/>
            <person name="Daugherty S.C."/>
            <person name="Brinkac L.M."/>
            <person name="Beanan M.J."/>
            <person name="Haft D.H."/>
            <person name="Nelson W.C."/>
            <person name="Davidsen T.M."/>
            <person name="Zafar N."/>
            <person name="Zhou L."/>
            <person name="Liu J."/>
            <person name="Yuan Q."/>
            <person name="Khouri H.M."/>
            <person name="Fedorova N.B."/>
            <person name="Tran B."/>
            <person name="Russell D."/>
            <person name="Berry K.J."/>
            <person name="Utterback T.R."/>
            <person name="Van Aken S.E."/>
            <person name="Feldblyum T.V."/>
            <person name="D'Ascenzo M."/>
            <person name="Deng W.-L."/>
            <person name="Ramos A.R."/>
            <person name="Alfano J.R."/>
            <person name="Cartinhour S."/>
            <person name="Chatterjee A.K."/>
            <person name="Delaney T.P."/>
            <person name="Lazarowitz S.G."/>
            <person name="Martin G.B."/>
            <person name="Schneider D.J."/>
            <person name="Tang X."/>
            <person name="Bender C.L."/>
            <person name="White O."/>
            <person name="Fraser C.M."/>
            <person name="Collmer A."/>
        </authorList>
    </citation>
    <scope>NUCLEOTIDE SEQUENCE [LARGE SCALE GENOMIC DNA]</scope>
    <source>
        <strain>ATCC BAA-871 / DC3000</strain>
    </source>
</reference>
<evidence type="ECO:0000255" key="1">
    <source>
        <dbReference type="HAMAP-Rule" id="MF_00183"/>
    </source>
</evidence>